<name>PYRD_ALBFT</name>
<evidence type="ECO:0000255" key="1">
    <source>
        <dbReference type="HAMAP-Rule" id="MF_00225"/>
    </source>
</evidence>
<reference key="1">
    <citation type="submission" date="2006-02" db="EMBL/GenBank/DDBJ databases">
        <title>Complete sequence of chromosome of Rhodoferax ferrireducens DSM 15236.</title>
        <authorList>
            <person name="Copeland A."/>
            <person name="Lucas S."/>
            <person name="Lapidus A."/>
            <person name="Barry K."/>
            <person name="Detter J.C."/>
            <person name="Glavina del Rio T."/>
            <person name="Hammon N."/>
            <person name="Israni S."/>
            <person name="Pitluck S."/>
            <person name="Brettin T."/>
            <person name="Bruce D."/>
            <person name="Han C."/>
            <person name="Tapia R."/>
            <person name="Gilna P."/>
            <person name="Kiss H."/>
            <person name="Schmutz J."/>
            <person name="Larimer F."/>
            <person name="Land M."/>
            <person name="Kyrpides N."/>
            <person name="Ivanova N."/>
            <person name="Richardson P."/>
        </authorList>
    </citation>
    <scope>NUCLEOTIDE SEQUENCE [LARGE SCALE GENOMIC DNA]</scope>
    <source>
        <strain>ATCC BAA-621 / DSM 15236 / T118</strain>
    </source>
</reference>
<gene>
    <name evidence="1" type="primary">pyrD</name>
    <name type="ordered locus">Rfer_2205</name>
</gene>
<accession>Q21WC4</accession>
<sequence>MALIPYALARPFLFSLDPETAHELTVRALALTQGTALQLAYGTSRVNDPITLAGLTFPNRVGLAAGLDKNARCIDGLGAMGFGFVEVGTVTPLAQPGNPRPRLFRLPQAQALINRFGFNNEGLASFMANVKNSTFYRQRQNPNLARKPLPLLLGLNIGKNAATPIERATEDYLTCLDGVYPYADYVAVNISSPNTRNLRSLQSDEALDSLLGAIAHRRQALVAQHGKQTPIFVKIAPDLDASQVDVIAASLRRHGMDGVIATNTTLSRDAVKGLAHADETGGLSGAPVLAMSNRVIGQLRAALGPGFPIIGVGGVMSADDAVSKIRAGADLVQIYTGLIYHGPKLVKQAAALIKTSC</sequence>
<protein>
    <recommendedName>
        <fullName evidence="1">Dihydroorotate dehydrogenase (quinone)</fullName>
        <ecNumber evidence="1">1.3.5.2</ecNumber>
    </recommendedName>
    <alternativeName>
        <fullName evidence="1">DHOdehase</fullName>
        <shortName evidence="1">DHOD</shortName>
        <shortName evidence="1">DHODase</shortName>
    </alternativeName>
    <alternativeName>
        <fullName evidence="1">Dihydroorotate oxidase</fullName>
    </alternativeName>
</protein>
<feature type="chain" id="PRO_1000024215" description="Dihydroorotate dehydrogenase (quinone)">
    <location>
        <begin position="1"/>
        <end position="357"/>
    </location>
</feature>
<feature type="active site" description="Nucleophile" evidence="1">
    <location>
        <position position="192"/>
    </location>
</feature>
<feature type="binding site" evidence="1">
    <location>
        <begin position="65"/>
        <end position="69"/>
    </location>
    <ligand>
        <name>FMN</name>
        <dbReference type="ChEBI" id="CHEBI:58210"/>
    </ligand>
</feature>
<feature type="binding site" evidence="1">
    <location>
        <position position="69"/>
    </location>
    <ligand>
        <name>substrate</name>
    </ligand>
</feature>
<feature type="binding site" evidence="1">
    <location>
        <position position="89"/>
    </location>
    <ligand>
        <name>FMN</name>
        <dbReference type="ChEBI" id="CHEBI:58210"/>
    </ligand>
</feature>
<feature type="binding site" evidence="1">
    <location>
        <begin position="114"/>
        <end position="118"/>
    </location>
    <ligand>
        <name>substrate</name>
    </ligand>
</feature>
<feature type="binding site" evidence="1">
    <location>
        <position position="156"/>
    </location>
    <ligand>
        <name>FMN</name>
        <dbReference type="ChEBI" id="CHEBI:58210"/>
    </ligand>
</feature>
<feature type="binding site" evidence="1">
    <location>
        <position position="189"/>
    </location>
    <ligand>
        <name>FMN</name>
        <dbReference type="ChEBI" id="CHEBI:58210"/>
    </ligand>
</feature>
<feature type="binding site" evidence="1">
    <location>
        <position position="189"/>
    </location>
    <ligand>
        <name>substrate</name>
    </ligand>
</feature>
<feature type="binding site" evidence="1">
    <location>
        <position position="194"/>
    </location>
    <ligand>
        <name>substrate</name>
    </ligand>
</feature>
<feature type="binding site" evidence="1">
    <location>
        <position position="234"/>
    </location>
    <ligand>
        <name>FMN</name>
        <dbReference type="ChEBI" id="CHEBI:58210"/>
    </ligand>
</feature>
<feature type="binding site" evidence="1">
    <location>
        <position position="262"/>
    </location>
    <ligand>
        <name>FMN</name>
        <dbReference type="ChEBI" id="CHEBI:58210"/>
    </ligand>
</feature>
<feature type="binding site" evidence="1">
    <location>
        <begin position="263"/>
        <end position="264"/>
    </location>
    <ligand>
        <name>substrate</name>
    </ligand>
</feature>
<feature type="binding site" evidence="1">
    <location>
        <position position="285"/>
    </location>
    <ligand>
        <name>FMN</name>
        <dbReference type="ChEBI" id="CHEBI:58210"/>
    </ligand>
</feature>
<feature type="binding site" evidence="1">
    <location>
        <position position="314"/>
    </location>
    <ligand>
        <name>FMN</name>
        <dbReference type="ChEBI" id="CHEBI:58210"/>
    </ligand>
</feature>
<feature type="binding site" evidence="1">
    <location>
        <begin position="335"/>
        <end position="336"/>
    </location>
    <ligand>
        <name>FMN</name>
        <dbReference type="ChEBI" id="CHEBI:58210"/>
    </ligand>
</feature>
<organism>
    <name type="scientific">Albidiferax ferrireducens (strain ATCC BAA-621 / DSM 15236 / T118)</name>
    <name type="common">Rhodoferax ferrireducens</name>
    <dbReference type="NCBI Taxonomy" id="338969"/>
    <lineage>
        <taxon>Bacteria</taxon>
        <taxon>Pseudomonadati</taxon>
        <taxon>Pseudomonadota</taxon>
        <taxon>Betaproteobacteria</taxon>
        <taxon>Burkholderiales</taxon>
        <taxon>Comamonadaceae</taxon>
        <taxon>Rhodoferax</taxon>
    </lineage>
</organism>
<proteinExistence type="inferred from homology"/>
<dbReference type="EC" id="1.3.5.2" evidence="1"/>
<dbReference type="EMBL" id="CP000267">
    <property type="protein sequence ID" value="ABD69929.1"/>
    <property type="molecule type" value="Genomic_DNA"/>
</dbReference>
<dbReference type="RefSeq" id="WP_011464497.1">
    <property type="nucleotide sequence ID" value="NC_007908.1"/>
</dbReference>
<dbReference type="SMR" id="Q21WC4"/>
<dbReference type="STRING" id="338969.Rfer_2205"/>
<dbReference type="KEGG" id="rfr:Rfer_2205"/>
<dbReference type="eggNOG" id="COG0167">
    <property type="taxonomic scope" value="Bacteria"/>
</dbReference>
<dbReference type="HOGENOM" id="CLU_013640_2_0_4"/>
<dbReference type="OrthoDB" id="9802377at2"/>
<dbReference type="UniPathway" id="UPA00070">
    <property type="reaction ID" value="UER00946"/>
</dbReference>
<dbReference type="Proteomes" id="UP000008332">
    <property type="component" value="Chromosome"/>
</dbReference>
<dbReference type="GO" id="GO:0005737">
    <property type="term" value="C:cytoplasm"/>
    <property type="evidence" value="ECO:0007669"/>
    <property type="project" value="InterPro"/>
</dbReference>
<dbReference type="GO" id="GO:0005886">
    <property type="term" value="C:plasma membrane"/>
    <property type="evidence" value="ECO:0007669"/>
    <property type="project" value="UniProtKB-SubCell"/>
</dbReference>
<dbReference type="GO" id="GO:0106430">
    <property type="term" value="F:dihydroorotate dehydrogenase (quinone) activity"/>
    <property type="evidence" value="ECO:0007669"/>
    <property type="project" value="UniProtKB-EC"/>
</dbReference>
<dbReference type="GO" id="GO:0006207">
    <property type="term" value="P:'de novo' pyrimidine nucleobase biosynthetic process"/>
    <property type="evidence" value="ECO:0007669"/>
    <property type="project" value="InterPro"/>
</dbReference>
<dbReference type="GO" id="GO:0044205">
    <property type="term" value="P:'de novo' UMP biosynthetic process"/>
    <property type="evidence" value="ECO:0007669"/>
    <property type="project" value="UniProtKB-UniRule"/>
</dbReference>
<dbReference type="CDD" id="cd04738">
    <property type="entry name" value="DHOD_2_like"/>
    <property type="match status" value="1"/>
</dbReference>
<dbReference type="Gene3D" id="3.20.20.70">
    <property type="entry name" value="Aldolase class I"/>
    <property type="match status" value="1"/>
</dbReference>
<dbReference type="HAMAP" id="MF_00225">
    <property type="entry name" value="DHO_dh_type2"/>
    <property type="match status" value="1"/>
</dbReference>
<dbReference type="InterPro" id="IPR013785">
    <property type="entry name" value="Aldolase_TIM"/>
</dbReference>
<dbReference type="InterPro" id="IPR050074">
    <property type="entry name" value="DHO_dehydrogenase"/>
</dbReference>
<dbReference type="InterPro" id="IPR005719">
    <property type="entry name" value="Dihydroorotate_DH_2"/>
</dbReference>
<dbReference type="InterPro" id="IPR005720">
    <property type="entry name" value="Dihydroorotate_DH_cat"/>
</dbReference>
<dbReference type="InterPro" id="IPR001295">
    <property type="entry name" value="Dihydroorotate_DH_CS"/>
</dbReference>
<dbReference type="NCBIfam" id="NF003644">
    <property type="entry name" value="PRK05286.1-1"/>
    <property type="match status" value="1"/>
</dbReference>
<dbReference type="NCBIfam" id="NF003645">
    <property type="entry name" value="PRK05286.1-2"/>
    <property type="match status" value="1"/>
</dbReference>
<dbReference type="NCBIfam" id="NF003646">
    <property type="entry name" value="PRK05286.1-4"/>
    <property type="match status" value="1"/>
</dbReference>
<dbReference type="NCBIfam" id="NF003652">
    <property type="entry name" value="PRK05286.2-5"/>
    <property type="match status" value="1"/>
</dbReference>
<dbReference type="NCBIfam" id="TIGR01036">
    <property type="entry name" value="pyrD_sub2"/>
    <property type="match status" value="1"/>
</dbReference>
<dbReference type="PANTHER" id="PTHR48109:SF4">
    <property type="entry name" value="DIHYDROOROTATE DEHYDROGENASE (QUINONE), MITOCHONDRIAL"/>
    <property type="match status" value="1"/>
</dbReference>
<dbReference type="PANTHER" id="PTHR48109">
    <property type="entry name" value="DIHYDROOROTATE DEHYDROGENASE (QUINONE), MITOCHONDRIAL-RELATED"/>
    <property type="match status" value="1"/>
</dbReference>
<dbReference type="Pfam" id="PF01180">
    <property type="entry name" value="DHO_dh"/>
    <property type="match status" value="1"/>
</dbReference>
<dbReference type="SUPFAM" id="SSF51395">
    <property type="entry name" value="FMN-linked oxidoreductases"/>
    <property type="match status" value="1"/>
</dbReference>
<dbReference type="PROSITE" id="PS00911">
    <property type="entry name" value="DHODEHASE_1"/>
    <property type="match status" value="1"/>
</dbReference>
<dbReference type="PROSITE" id="PS00912">
    <property type="entry name" value="DHODEHASE_2"/>
    <property type="match status" value="1"/>
</dbReference>
<keyword id="KW-1003">Cell membrane</keyword>
<keyword id="KW-0285">Flavoprotein</keyword>
<keyword id="KW-0288">FMN</keyword>
<keyword id="KW-0472">Membrane</keyword>
<keyword id="KW-0560">Oxidoreductase</keyword>
<keyword id="KW-0665">Pyrimidine biosynthesis</keyword>
<keyword id="KW-1185">Reference proteome</keyword>
<comment type="function">
    <text evidence="1">Catalyzes the conversion of dihydroorotate to orotate with quinone as electron acceptor.</text>
</comment>
<comment type="catalytic activity">
    <reaction evidence="1">
        <text>(S)-dihydroorotate + a quinone = orotate + a quinol</text>
        <dbReference type="Rhea" id="RHEA:30187"/>
        <dbReference type="ChEBI" id="CHEBI:24646"/>
        <dbReference type="ChEBI" id="CHEBI:30839"/>
        <dbReference type="ChEBI" id="CHEBI:30864"/>
        <dbReference type="ChEBI" id="CHEBI:132124"/>
        <dbReference type="EC" id="1.3.5.2"/>
    </reaction>
</comment>
<comment type="cofactor">
    <cofactor evidence="1">
        <name>FMN</name>
        <dbReference type="ChEBI" id="CHEBI:58210"/>
    </cofactor>
    <text evidence="1">Binds 1 FMN per subunit.</text>
</comment>
<comment type="pathway">
    <text evidence="1">Pyrimidine metabolism; UMP biosynthesis via de novo pathway; orotate from (S)-dihydroorotate (quinone route): step 1/1.</text>
</comment>
<comment type="subunit">
    <text evidence="1">Monomer.</text>
</comment>
<comment type="subcellular location">
    <subcellularLocation>
        <location evidence="1">Cell membrane</location>
        <topology evidence="1">Peripheral membrane protein</topology>
    </subcellularLocation>
</comment>
<comment type="similarity">
    <text evidence="1">Belongs to the dihydroorotate dehydrogenase family. Type 2 subfamily.</text>
</comment>